<dbReference type="EMBL" id="BA000033">
    <property type="protein sequence ID" value="BAB95527.1"/>
    <property type="molecule type" value="Genomic_DNA"/>
</dbReference>
<dbReference type="RefSeq" id="WP_000090512.1">
    <property type="nucleotide sequence ID" value="NC_003923.1"/>
</dbReference>
<dbReference type="PDB" id="8Y38">
    <property type="method" value="EM"/>
    <property type="resolution" value="2.58 A"/>
    <property type="chains" value="d=1-200"/>
</dbReference>
<dbReference type="PDB" id="8Y39">
    <property type="method" value="EM"/>
    <property type="resolution" value="3.60 A"/>
    <property type="chains" value="d=1-200"/>
</dbReference>
<dbReference type="PDBsum" id="8Y38"/>
<dbReference type="PDBsum" id="8Y39"/>
<dbReference type="EMDB" id="EMD-38875"/>
<dbReference type="EMDB" id="EMD-38876"/>
<dbReference type="SMR" id="P66564"/>
<dbReference type="KEGG" id="sam:MW1662"/>
<dbReference type="HOGENOM" id="CLU_092403_0_1_9"/>
<dbReference type="GO" id="GO:0015935">
    <property type="term" value="C:small ribosomal subunit"/>
    <property type="evidence" value="ECO:0007669"/>
    <property type="project" value="InterPro"/>
</dbReference>
<dbReference type="GO" id="GO:0019843">
    <property type="term" value="F:rRNA binding"/>
    <property type="evidence" value="ECO:0007669"/>
    <property type="project" value="UniProtKB-UniRule"/>
</dbReference>
<dbReference type="GO" id="GO:0003735">
    <property type="term" value="F:structural constituent of ribosome"/>
    <property type="evidence" value="ECO:0007669"/>
    <property type="project" value="InterPro"/>
</dbReference>
<dbReference type="GO" id="GO:0042274">
    <property type="term" value="P:ribosomal small subunit biogenesis"/>
    <property type="evidence" value="ECO:0007669"/>
    <property type="project" value="TreeGrafter"/>
</dbReference>
<dbReference type="GO" id="GO:0006412">
    <property type="term" value="P:translation"/>
    <property type="evidence" value="ECO:0007669"/>
    <property type="project" value="UniProtKB-UniRule"/>
</dbReference>
<dbReference type="CDD" id="cd00165">
    <property type="entry name" value="S4"/>
    <property type="match status" value="1"/>
</dbReference>
<dbReference type="FunFam" id="1.10.1050.10:FF:000001">
    <property type="entry name" value="30S ribosomal protein S4"/>
    <property type="match status" value="1"/>
</dbReference>
<dbReference type="FunFam" id="3.10.290.10:FF:000001">
    <property type="entry name" value="30S ribosomal protein S4"/>
    <property type="match status" value="1"/>
</dbReference>
<dbReference type="Gene3D" id="1.10.1050.10">
    <property type="entry name" value="Ribosomal Protein S4 Delta 41, Chain A, domain 1"/>
    <property type="match status" value="1"/>
</dbReference>
<dbReference type="Gene3D" id="3.10.290.10">
    <property type="entry name" value="RNA-binding S4 domain"/>
    <property type="match status" value="1"/>
</dbReference>
<dbReference type="HAMAP" id="MF_01306_B">
    <property type="entry name" value="Ribosomal_uS4_B"/>
    <property type="match status" value="1"/>
</dbReference>
<dbReference type="InterPro" id="IPR022801">
    <property type="entry name" value="Ribosomal_uS4"/>
</dbReference>
<dbReference type="InterPro" id="IPR005709">
    <property type="entry name" value="Ribosomal_uS4_bac-type"/>
</dbReference>
<dbReference type="InterPro" id="IPR018079">
    <property type="entry name" value="Ribosomal_uS4_CS"/>
</dbReference>
<dbReference type="InterPro" id="IPR001912">
    <property type="entry name" value="Ribosomal_uS4_N"/>
</dbReference>
<dbReference type="InterPro" id="IPR002942">
    <property type="entry name" value="S4_RNA-bd"/>
</dbReference>
<dbReference type="InterPro" id="IPR036986">
    <property type="entry name" value="S4_RNA-bd_sf"/>
</dbReference>
<dbReference type="NCBIfam" id="NF003717">
    <property type="entry name" value="PRK05327.1"/>
    <property type="match status" value="1"/>
</dbReference>
<dbReference type="NCBIfam" id="TIGR01017">
    <property type="entry name" value="rpsD_bact"/>
    <property type="match status" value="1"/>
</dbReference>
<dbReference type="PANTHER" id="PTHR11831">
    <property type="entry name" value="30S 40S RIBOSOMAL PROTEIN"/>
    <property type="match status" value="1"/>
</dbReference>
<dbReference type="PANTHER" id="PTHR11831:SF4">
    <property type="entry name" value="SMALL RIBOSOMAL SUBUNIT PROTEIN US4M"/>
    <property type="match status" value="1"/>
</dbReference>
<dbReference type="Pfam" id="PF00163">
    <property type="entry name" value="Ribosomal_S4"/>
    <property type="match status" value="1"/>
</dbReference>
<dbReference type="Pfam" id="PF01479">
    <property type="entry name" value="S4"/>
    <property type="match status" value="1"/>
</dbReference>
<dbReference type="SMART" id="SM01390">
    <property type="entry name" value="Ribosomal_S4"/>
    <property type="match status" value="1"/>
</dbReference>
<dbReference type="SMART" id="SM00363">
    <property type="entry name" value="S4"/>
    <property type="match status" value="1"/>
</dbReference>
<dbReference type="SUPFAM" id="SSF55174">
    <property type="entry name" value="Alpha-L RNA-binding motif"/>
    <property type="match status" value="1"/>
</dbReference>
<dbReference type="PROSITE" id="PS00632">
    <property type="entry name" value="RIBOSOMAL_S4"/>
    <property type="match status" value="1"/>
</dbReference>
<dbReference type="PROSITE" id="PS50889">
    <property type="entry name" value="S4"/>
    <property type="match status" value="1"/>
</dbReference>
<gene>
    <name evidence="1" type="primary">rpsD</name>
    <name type="ordered locus">MW1662</name>
</gene>
<keyword id="KW-0002">3D-structure</keyword>
<keyword id="KW-0687">Ribonucleoprotein</keyword>
<keyword id="KW-0689">Ribosomal protein</keyword>
<keyword id="KW-0694">RNA-binding</keyword>
<keyword id="KW-0699">rRNA-binding</keyword>
<feature type="chain" id="PRO_0000132461" description="Small ribosomal subunit protein uS4">
    <location>
        <begin position="1"/>
        <end position="200"/>
    </location>
</feature>
<feature type="domain" description="S4 RNA-binding" evidence="1">
    <location>
        <begin position="92"/>
        <end position="155"/>
    </location>
</feature>
<evidence type="ECO:0000255" key="1">
    <source>
        <dbReference type="HAMAP-Rule" id="MF_01306"/>
    </source>
</evidence>
<evidence type="ECO:0000305" key="2"/>
<reference key="1">
    <citation type="journal article" date="2002" name="Lancet">
        <title>Genome and virulence determinants of high virulence community-acquired MRSA.</title>
        <authorList>
            <person name="Baba T."/>
            <person name="Takeuchi F."/>
            <person name="Kuroda M."/>
            <person name="Yuzawa H."/>
            <person name="Aoki K."/>
            <person name="Oguchi A."/>
            <person name="Nagai Y."/>
            <person name="Iwama N."/>
            <person name="Asano K."/>
            <person name="Naimi T."/>
            <person name="Kuroda H."/>
            <person name="Cui L."/>
            <person name="Yamamoto K."/>
            <person name="Hiramatsu K."/>
        </authorList>
    </citation>
    <scope>NUCLEOTIDE SEQUENCE [LARGE SCALE GENOMIC DNA]</scope>
    <source>
        <strain>MW2</strain>
    </source>
</reference>
<comment type="function">
    <text evidence="1">One of the primary rRNA binding proteins, it binds directly to 16S rRNA where it nucleates assembly of the body of the 30S subunit.</text>
</comment>
<comment type="function">
    <text evidence="1">With S5 and S12 plays an important role in translational accuracy.</text>
</comment>
<comment type="subunit">
    <text evidence="1">Part of the 30S ribosomal subunit. Contacts protein S5. The interaction surface between S4 and S5 is involved in control of translational fidelity.</text>
</comment>
<comment type="similarity">
    <text evidence="1">Belongs to the universal ribosomal protein uS4 family.</text>
</comment>
<organism>
    <name type="scientific">Staphylococcus aureus (strain MW2)</name>
    <dbReference type="NCBI Taxonomy" id="196620"/>
    <lineage>
        <taxon>Bacteria</taxon>
        <taxon>Bacillati</taxon>
        <taxon>Bacillota</taxon>
        <taxon>Bacilli</taxon>
        <taxon>Bacillales</taxon>
        <taxon>Staphylococcaceae</taxon>
        <taxon>Staphylococcus</taxon>
    </lineage>
</organism>
<accession>P66564</accession>
<accession>Q99TE4</accession>
<proteinExistence type="evidence at protein level"/>
<name>RS4_STAAW</name>
<protein>
    <recommendedName>
        <fullName evidence="1">Small ribosomal subunit protein uS4</fullName>
    </recommendedName>
    <alternativeName>
        <fullName evidence="2">30S ribosomal protein S4</fullName>
    </alternativeName>
</protein>
<sequence length="200" mass="23013">MARFRGSNWKKSRRLGISLSGTGKELEKRPYAPGQHGPNQRKKLSEYGLQLREKQKLRYLYGMTERQFRNTFDIAGKKFGVHGENFMILLASRLDAVVYSLGLARTRRQARQLVNHGHILVDGKRVDIPSYSVKPGQTISVREKSQKLNIIVESVEINNFVPEYLNFDADSLTGTFVRLPERSELPAEINEQLIVEYYSR</sequence>